<proteinExistence type="inferred from homology"/>
<protein>
    <recommendedName>
        <fullName evidence="1">tRNA dimethylallyltransferase</fullName>
        <ecNumber evidence="1">2.5.1.75</ecNumber>
    </recommendedName>
    <alternativeName>
        <fullName evidence="1">Dimethylallyl diphosphate:tRNA dimethylallyltransferase</fullName>
        <shortName evidence="1">DMAPP:tRNA dimethylallyltransferase</shortName>
        <shortName evidence="1">DMATase</shortName>
    </alternativeName>
    <alternativeName>
        <fullName evidence="1">Isopentenyl-diphosphate:tRNA isopentenyltransferase</fullName>
        <shortName evidence="1">IPP transferase</shortName>
        <shortName evidence="1">IPPT</shortName>
        <shortName evidence="1">IPTase</shortName>
    </alternativeName>
</protein>
<comment type="function">
    <text evidence="1">Catalyzes the transfer of a dimethylallyl group onto the adenine at position 37 in tRNAs that read codons beginning with uridine, leading to the formation of N6-(dimethylallyl)adenosine (i(6)A).</text>
</comment>
<comment type="catalytic activity">
    <reaction evidence="1">
        <text>adenosine(37) in tRNA + dimethylallyl diphosphate = N(6)-dimethylallyladenosine(37) in tRNA + diphosphate</text>
        <dbReference type="Rhea" id="RHEA:26482"/>
        <dbReference type="Rhea" id="RHEA-COMP:10162"/>
        <dbReference type="Rhea" id="RHEA-COMP:10375"/>
        <dbReference type="ChEBI" id="CHEBI:33019"/>
        <dbReference type="ChEBI" id="CHEBI:57623"/>
        <dbReference type="ChEBI" id="CHEBI:74411"/>
        <dbReference type="ChEBI" id="CHEBI:74415"/>
        <dbReference type="EC" id="2.5.1.75"/>
    </reaction>
</comment>
<comment type="cofactor">
    <cofactor evidence="1">
        <name>Mg(2+)</name>
        <dbReference type="ChEBI" id="CHEBI:18420"/>
    </cofactor>
</comment>
<comment type="subunit">
    <text evidence="1">Monomer.</text>
</comment>
<comment type="similarity">
    <text evidence="1">Belongs to the IPP transferase family.</text>
</comment>
<gene>
    <name evidence="1" type="primary">miaA</name>
    <name type="ordered locus">Smed_2011</name>
</gene>
<feature type="chain" id="PRO_0000377326" description="tRNA dimethylallyltransferase">
    <location>
        <begin position="1"/>
        <end position="305"/>
    </location>
</feature>
<feature type="region of interest" description="Interaction with substrate tRNA" evidence="1">
    <location>
        <begin position="40"/>
        <end position="43"/>
    </location>
</feature>
<feature type="region of interest" description="Interaction with substrate tRNA" evidence="1">
    <location>
        <begin position="164"/>
        <end position="168"/>
    </location>
</feature>
<feature type="binding site" evidence="1">
    <location>
        <begin position="15"/>
        <end position="22"/>
    </location>
    <ligand>
        <name>ATP</name>
        <dbReference type="ChEBI" id="CHEBI:30616"/>
    </ligand>
</feature>
<feature type="binding site" evidence="1">
    <location>
        <begin position="17"/>
        <end position="22"/>
    </location>
    <ligand>
        <name>substrate</name>
    </ligand>
</feature>
<feature type="site" description="Interaction with substrate tRNA" evidence="1">
    <location>
        <position position="106"/>
    </location>
</feature>
<feature type="site" description="Interaction with substrate tRNA" evidence="1">
    <location>
        <position position="128"/>
    </location>
</feature>
<accession>A6UB14</accession>
<dbReference type="EC" id="2.5.1.75" evidence="1"/>
<dbReference type="EMBL" id="CP000738">
    <property type="protein sequence ID" value="ABR60844.1"/>
    <property type="molecule type" value="Genomic_DNA"/>
</dbReference>
<dbReference type="RefSeq" id="YP_001327679.1">
    <property type="nucleotide sequence ID" value="NC_009636.1"/>
</dbReference>
<dbReference type="SMR" id="A6UB14"/>
<dbReference type="STRING" id="366394.Smed_2011"/>
<dbReference type="KEGG" id="smd:Smed_2011"/>
<dbReference type="PATRIC" id="fig|366394.8.peg.5169"/>
<dbReference type="eggNOG" id="COG0324">
    <property type="taxonomic scope" value="Bacteria"/>
</dbReference>
<dbReference type="HOGENOM" id="CLU_032616_0_1_5"/>
<dbReference type="OrthoDB" id="9776390at2"/>
<dbReference type="Proteomes" id="UP000001108">
    <property type="component" value="Chromosome"/>
</dbReference>
<dbReference type="GO" id="GO:0005524">
    <property type="term" value="F:ATP binding"/>
    <property type="evidence" value="ECO:0007669"/>
    <property type="project" value="UniProtKB-UniRule"/>
</dbReference>
<dbReference type="GO" id="GO:0052381">
    <property type="term" value="F:tRNA dimethylallyltransferase activity"/>
    <property type="evidence" value="ECO:0007669"/>
    <property type="project" value="UniProtKB-UniRule"/>
</dbReference>
<dbReference type="GO" id="GO:0006400">
    <property type="term" value="P:tRNA modification"/>
    <property type="evidence" value="ECO:0007669"/>
    <property type="project" value="TreeGrafter"/>
</dbReference>
<dbReference type="FunFam" id="1.10.20.140:FF:000001">
    <property type="entry name" value="tRNA dimethylallyltransferase"/>
    <property type="match status" value="1"/>
</dbReference>
<dbReference type="Gene3D" id="1.10.20.140">
    <property type="match status" value="1"/>
</dbReference>
<dbReference type="Gene3D" id="3.40.50.300">
    <property type="entry name" value="P-loop containing nucleotide triphosphate hydrolases"/>
    <property type="match status" value="1"/>
</dbReference>
<dbReference type="HAMAP" id="MF_00185">
    <property type="entry name" value="IPP_trans"/>
    <property type="match status" value="1"/>
</dbReference>
<dbReference type="InterPro" id="IPR039657">
    <property type="entry name" value="Dimethylallyltransferase"/>
</dbReference>
<dbReference type="InterPro" id="IPR018022">
    <property type="entry name" value="IPT"/>
</dbReference>
<dbReference type="InterPro" id="IPR027417">
    <property type="entry name" value="P-loop_NTPase"/>
</dbReference>
<dbReference type="NCBIfam" id="TIGR00174">
    <property type="entry name" value="miaA"/>
    <property type="match status" value="1"/>
</dbReference>
<dbReference type="PANTHER" id="PTHR11088">
    <property type="entry name" value="TRNA DIMETHYLALLYLTRANSFERASE"/>
    <property type="match status" value="1"/>
</dbReference>
<dbReference type="PANTHER" id="PTHR11088:SF60">
    <property type="entry name" value="TRNA DIMETHYLALLYLTRANSFERASE"/>
    <property type="match status" value="1"/>
</dbReference>
<dbReference type="Pfam" id="PF01715">
    <property type="entry name" value="IPPT"/>
    <property type="match status" value="1"/>
</dbReference>
<dbReference type="SUPFAM" id="SSF52540">
    <property type="entry name" value="P-loop containing nucleoside triphosphate hydrolases"/>
    <property type="match status" value="2"/>
</dbReference>
<keyword id="KW-0067">ATP-binding</keyword>
<keyword id="KW-0460">Magnesium</keyword>
<keyword id="KW-0547">Nucleotide-binding</keyword>
<keyword id="KW-0808">Transferase</keyword>
<keyword id="KW-0819">tRNA processing</keyword>
<reference key="1">
    <citation type="submission" date="2007-06" db="EMBL/GenBank/DDBJ databases">
        <title>Complete sequence of Sinorhizobium medicae WSM419 chromosome.</title>
        <authorList>
            <consortium name="US DOE Joint Genome Institute"/>
            <person name="Copeland A."/>
            <person name="Lucas S."/>
            <person name="Lapidus A."/>
            <person name="Barry K."/>
            <person name="Glavina del Rio T."/>
            <person name="Dalin E."/>
            <person name="Tice H."/>
            <person name="Pitluck S."/>
            <person name="Chain P."/>
            <person name="Malfatti S."/>
            <person name="Shin M."/>
            <person name="Vergez L."/>
            <person name="Schmutz J."/>
            <person name="Larimer F."/>
            <person name="Land M."/>
            <person name="Hauser L."/>
            <person name="Kyrpides N."/>
            <person name="Mikhailova N."/>
            <person name="Reeve W.G."/>
            <person name="Richardson P."/>
        </authorList>
    </citation>
    <scope>NUCLEOTIDE SEQUENCE [LARGE SCALE GENOMIC DNA]</scope>
    <source>
        <strain>WSM419</strain>
    </source>
</reference>
<sequence>MQNLARDIDAILITGPTASGKSALGVKLAQRHGGVVINADSMQVYGTLKILTARPDESEMGGVEHFLYGHVPPDRAYSTGAWLREAEALVARLRIEGRMPVFVGGTGLYFKALTGGLSDMPEVPHAIRQRLRKRLMEEGAEALHYELSALDPETAQRVRSGDGQRIVRALEVMEATGRPIGFYQQSRGPVIIDATRARKIVVLPERPVLHSRINRRFEAMLGMGAVEEVRALLALDLPLEMPAMKAIGVQQIAAMLKGEMSEAQAIEAGAAQTRQYAKRQMTWFRNQLDETWQRIDAAEALGENH</sequence>
<name>MIAA_SINMW</name>
<evidence type="ECO:0000255" key="1">
    <source>
        <dbReference type="HAMAP-Rule" id="MF_00185"/>
    </source>
</evidence>
<organism>
    <name type="scientific">Sinorhizobium medicae (strain WSM419)</name>
    <name type="common">Ensifer medicae</name>
    <dbReference type="NCBI Taxonomy" id="366394"/>
    <lineage>
        <taxon>Bacteria</taxon>
        <taxon>Pseudomonadati</taxon>
        <taxon>Pseudomonadota</taxon>
        <taxon>Alphaproteobacteria</taxon>
        <taxon>Hyphomicrobiales</taxon>
        <taxon>Rhizobiaceae</taxon>
        <taxon>Sinorhizobium/Ensifer group</taxon>
        <taxon>Sinorhizobium</taxon>
    </lineage>
</organism>